<gene>
    <name type="primary">nuf2</name>
    <name type="ORF">SPAC27F1.04c</name>
</gene>
<name>NUF2_SCHPO</name>
<feature type="chain" id="PRO_0000057994" description="Kinetochore protein nuf2">
    <location>
        <begin position="1"/>
        <end position="441"/>
    </location>
</feature>
<feature type="coiled-coil region" evidence="1">
    <location>
        <begin position="51"/>
        <end position="80"/>
    </location>
</feature>
<feature type="coiled-coil region" evidence="1">
    <location>
        <begin position="128"/>
        <end position="186"/>
    </location>
</feature>
<feature type="coiled-coil region" evidence="1">
    <location>
        <begin position="316"/>
        <end position="426"/>
    </location>
</feature>
<feature type="modified residue" description="Phosphoserine" evidence="6">
    <location>
        <position position="143"/>
    </location>
</feature>
<feature type="modified residue" description="Phosphoserine" evidence="6">
    <location>
        <position position="242"/>
    </location>
</feature>
<dbReference type="EMBL" id="CU329670">
    <property type="protein sequence ID" value="CAA93293.1"/>
    <property type="molecule type" value="Genomic_DNA"/>
</dbReference>
<dbReference type="PIR" id="T38462">
    <property type="entry name" value="T38462"/>
</dbReference>
<dbReference type="RefSeq" id="NP_594532.1">
    <property type="nucleotide sequence ID" value="NM_001019961.2"/>
</dbReference>
<dbReference type="SMR" id="Q10173"/>
<dbReference type="BioGRID" id="278487">
    <property type="interactions" value="19"/>
</dbReference>
<dbReference type="ComplexPortal" id="CPX-549">
    <property type="entry name" value="Ndc80 complex"/>
</dbReference>
<dbReference type="DIP" id="DIP-36501N"/>
<dbReference type="FunCoup" id="Q10173">
    <property type="interactions" value="98"/>
</dbReference>
<dbReference type="IntAct" id="Q10173">
    <property type="interactions" value="7"/>
</dbReference>
<dbReference type="STRING" id="284812.Q10173"/>
<dbReference type="iPTMnet" id="Q10173"/>
<dbReference type="PaxDb" id="4896-SPAC27F1.04c.1"/>
<dbReference type="EnsemblFungi" id="SPAC27F1.04c.1">
    <property type="protein sequence ID" value="SPAC27F1.04c.1:pep"/>
    <property type="gene ID" value="SPAC27F1.04c"/>
</dbReference>
<dbReference type="GeneID" id="2542004"/>
<dbReference type="KEGG" id="spo:2542004"/>
<dbReference type="PomBase" id="SPAC27F1.04c">
    <property type="gene designation" value="nuf2"/>
</dbReference>
<dbReference type="VEuPathDB" id="FungiDB:SPAC27F1.04c"/>
<dbReference type="eggNOG" id="KOG4438">
    <property type="taxonomic scope" value="Eukaryota"/>
</dbReference>
<dbReference type="HOGENOM" id="CLU_025461_1_1_1"/>
<dbReference type="InParanoid" id="Q10173"/>
<dbReference type="OMA" id="YLKMEAH"/>
<dbReference type="PhylomeDB" id="Q10173"/>
<dbReference type="CD-CODE" id="576F0A76">
    <property type="entry name" value="Centrosome"/>
</dbReference>
<dbReference type="PRO" id="PR:Q10173"/>
<dbReference type="Proteomes" id="UP000002485">
    <property type="component" value="Chromosome I"/>
</dbReference>
<dbReference type="GO" id="GO:0000775">
    <property type="term" value="C:chromosome, centromeric region"/>
    <property type="evidence" value="ECO:0000314"/>
    <property type="project" value="PomBase"/>
</dbReference>
<dbReference type="GO" id="GO:0000779">
    <property type="term" value="C:condensed chromosome, centromeric region"/>
    <property type="evidence" value="ECO:0000314"/>
    <property type="project" value="PomBase"/>
</dbReference>
<dbReference type="GO" id="GO:0005737">
    <property type="term" value="C:cytoplasm"/>
    <property type="evidence" value="ECO:0007669"/>
    <property type="project" value="UniProtKB-KW"/>
</dbReference>
<dbReference type="GO" id="GO:0000776">
    <property type="term" value="C:kinetochore"/>
    <property type="evidence" value="ECO:0000314"/>
    <property type="project" value="PomBase"/>
</dbReference>
<dbReference type="GO" id="GO:0035974">
    <property type="term" value="C:meiotic spindle pole body"/>
    <property type="evidence" value="ECO:0000314"/>
    <property type="project" value="PomBase"/>
</dbReference>
<dbReference type="GO" id="GO:0031262">
    <property type="term" value="C:Ndc80 complex"/>
    <property type="evidence" value="ECO:0000314"/>
    <property type="project" value="PomBase"/>
</dbReference>
<dbReference type="GO" id="GO:0005634">
    <property type="term" value="C:nucleus"/>
    <property type="evidence" value="ECO:0000305"/>
    <property type="project" value="PomBase"/>
</dbReference>
<dbReference type="GO" id="GO:0140483">
    <property type="term" value="F:kinetochore adaptor activity"/>
    <property type="evidence" value="ECO:0000353"/>
    <property type="project" value="PomBase"/>
</dbReference>
<dbReference type="GO" id="GO:0044877">
    <property type="term" value="F:protein-containing complex binding"/>
    <property type="evidence" value="ECO:0000318"/>
    <property type="project" value="GO_Central"/>
</dbReference>
<dbReference type="GO" id="GO:0051315">
    <property type="term" value="P:attachment of mitotic spindle microtubules to kinetochore"/>
    <property type="evidence" value="ECO:0000315"/>
    <property type="project" value="PomBase"/>
</dbReference>
<dbReference type="GO" id="GO:0008608">
    <property type="term" value="P:attachment of spindle microtubules to kinetochore"/>
    <property type="evidence" value="ECO:0000303"/>
    <property type="project" value="ComplexPortal"/>
</dbReference>
<dbReference type="GO" id="GO:0051301">
    <property type="term" value="P:cell division"/>
    <property type="evidence" value="ECO:0007669"/>
    <property type="project" value="UniProtKB-KW"/>
</dbReference>
<dbReference type="GO" id="GO:0007059">
    <property type="term" value="P:chromosome segregation"/>
    <property type="evidence" value="ECO:0000303"/>
    <property type="project" value="ComplexPortal"/>
</dbReference>
<dbReference type="GO" id="GO:0140456">
    <property type="term" value="P:initial meiotic spindle pole body separation"/>
    <property type="evidence" value="ECO:0000314"/>
    <property type="project" value="PomBase"/>
</dbReference>
<dbReference type="GO" id="GO:0000073">
    <property type="term" value="P:initial mitotic spindle pole body separation"/>
    <property type="evidence" value="ECO:0000314"/>
    <property type="project" value="PomBase"/>
</dbReference>
<dbReference type="GO" id="GO:0051383">
    <property type="term" value="P:kinetochore organization"/>
    <property type="evidence" value="ECO:0000318"/>
    <property type="project" value="GO_Central"/>
</dbReference>
<dbReference type="GO" id="GO:1990571">
    <property type="term" value="P:meiotic centromere clustering"/>
    <property type="evidence" value="ECO:0000315"/>
    <property type="project" value="PomBase"/>
</dbReference>
<dbReference type="GO" id="GO:0045132">
    <property type="term" value="P:meiotic chromosome segregation"/>
    <property type="evidence" value="ECO:0000318"/>
    <property type="project" value="GO_Central"/>
</dbReference>
<dbReference type="GO" id="GO:0007052">
    <property type="term" value="P:mitotic spindle organization"/>
    <property type="evidence" value="ECO:0000318"/>
    <property type="project" value="GO_Central"/>
</dbReference>
<dbReference type="GO" id="GO:0051455">
    <property type="term" value="P:spindle attachment to meiosis I kinetochore"/>
    <property type="evidence" value="ECO:0000305"/>
    <property type="project" value="PomBase"/>
</dbReference>
<dbReference type="Gene3D" id="1.10.418.60">
    <property type="entry name" value="Ncd80 complex, Nuf2 subunit"/>
    <property type="match status" value="1"/>
</dbReference>
<dbReference type="InterPro" id="IPR005549">
    <property type="entry name" value="Kinetochore_Nuf2_N"/>
</dbReference>
<dbReference type="InterPro" id="IPR041112">
    <property type="entry name" value="Nuf2_DHR10-like"/>
</dbReference>
<dbReference type="InterPro" id="IPR038275">
    <property type="entry name" value="Nuf2_N_sf"/>
</dbReference>
<dbReference type="PANTHER" id="PTHR21650:SF2">
    <property type="entry name" value="KINETOCHORE PROTEIN NUF2"/>
    <property type="match status" value="1"/>
</dbReference>
<dbReference type="PANTHER" id="PTHR21650">
    <property type="entry name" value="MEMBRALIN/KINETOCHORE PROTEIN NUF2"/>
    <property type="match status" value="1"/>
</dbReference>
<dbReference type="Pfam" id="PF03800">
    <property type="entry name" value="Nuf2"/>
    <property type="match status" value="1"/>
</dbReference>
<dbReference type="Pfam" id="PF18595">
    <property type="entry name" value="Nuf2_DHR10-like"/>
    <property type="match status" value="1"/>
</dbReference>
<protein>
    <recommendedName>
        <fullName>Kinetochore protein nuf2</fullName>
    </recommendedName>
    <alternativeName>
        <fullName>NMS complex subunit nuf2</fullName>
    </alternativeName>
</protein>
<reference key="1">
    <citation type="journal article" date="2001" name="Chromosoma">
        <title>A conserved protein, Nuf2, is implicated in connecting the centromere to the spindle during chromosome segregation: a link between the kinetochore function and the spindle checkpoint.</title>
        <authorList>
            <person name="Nabetani A."/>
            <person name="Koujin T."/>
            <person name="Tsutsumi C."/>
            <person name="Haraguchi T."/>
            <person name="Hiraoka Y."/>
        </authorList>
    </citation>
    <scope>NUCLEOTIDE SEQUENCE [GENOMIC DNA]</scope>
    <scope>FUNCTION</scope>
    <scope>SUBCELLULAR LOCATION</scope>
</reference>
<reference key="2">
    <citation type="journal article" date="2002" name="Nature">
        <title>The genome sequence of Schizosaccharomyces pombe.</title>
        <authorList>
            <person name="Wood V."/>
            <person name="Gwilliam R."/>
            <person name="Rajandream M.A."/>
            <person name="Lyne M.H."/>
            <person name="Lyne R."/>
            <person name="Stewart A."/>
            <person name="Sgouros J.G."/>
            <person name="Peat N."/>
            <person name="Hayles J."/>
            <person name="Baker S.G."/>
            <person name="Basham D."/>
            <person name="Bowman S."/>
            <person name="Brooks K."/>
            <person name="Brown D."/>
            <person name="Brown S."/>
            <person name="Chillingworth T."/>
            <person name="Churcher C.M."/>
            <person name="Collins M."/>
            <person name="Connor R."/>
            <person name="Cronin A."/>
            <person name="Davis P."/>
            <person name="Feltwell T."/>
            <person name="Fraser A."/>
            <person name="Gentles S."/>
            <person name="Goble A."/>
            <person name="Hamlin N."/>
            <person name="Harris D.E."/>
            <person name="Hidalgo J."/>
            <person name="Hodgson G."/>
            <person name="Holroyd S."/>
            <person name="Hornsby T."/>
            <person name="Howarth S."/>
            <person name="Huckle E.J."/>
            <person name="Hunt S."/>
            <person name="Jagels K."/>
            <person name="James K.D."/>
            <person name="Jones L."/>
            <person name="Jones M."/>
            <person name="Leather S."/>
            <person name="McDonald S."/>
            <person name="McLean J."/>
            <person name="Mooney P."/>
            <person name="Moule S."/>
            <person name="Mungall K.L."/>
            <person name="Murphy L.D."/>
            <person name="Niblett D."/>
            <person name="Odell C."/>
            <person name="Oliver K."/>
            <person name="O'Neil S."/>
            <person name="Pearson D."/>
            <person name="Quail M.A."/>
            <person name="Rabbinowitsch E."/>
            <person name="Rutherford K.M."/>
            <person name="Rutter S."/>
            <person name="Saunders D."/>
            <person name="Seeger K."/>
            <person name="Sharp S."/>
            <person name="Skelton J."/>
            <person name="Simmonds M.N."/>
            <person name="Squares R."/>
            <person name="Squares S."/>
            <person name="Stevens K."/>
            <person name="Taylor K."/>
            <person name="Taylor R.G."/>
            <person name="Tivey A."/>
            <person name="Walsh S.V."/>
            <person name="Warren T."/>
            <person name="Whitehead S."/>
            <person name="Woodward J.R."/>
            <person name="Volckaert G."/>
            <person name="Aert R."/>
            <person name="Robben J."/>
            <person name="Grymonprez B."/>
            <person name="Weltjens I."/>
            <person name="Vanstreels E."/>
            <person name="Rieger M."/>
            <person name="Schaefer M."/>
            <person name="Mueller-Auer S."/>
            <person name="Gabel C."/>
            <person name="Fuchs M."/>
            <person name="Duesterhoeft A."/>
            <person name="Fritzc C."/>
            <person name="Holzer E."/>
            <person name="Moestl D."/>
            <person name="Hilbert H."/>
            <person name="Borzym K."/>
            <person name="Langer I."/>
            <person name="Beck A."/>
            <person name="Lehrach H."/>
            <person name="Reinhardt R."/>
            <person name="Pohl T.M."/>
            <person name="Eger P."/>
            <person name="Zimmermann W."/>
            <person name="Wedler H."/>
            <person name="Wambutt R."/>
            <person name="Purnelle B."/>
            <person name="Goffeau A."/>
            <person name="Cadieu E."/>
            <person name="Dreano S."/>
            <person name="Gloux S."/>
            <person name="Lelaure V."/>
            <person name="Mottier S."/>
            <person name="Galibert F."/>
            <person name="Aves S.J."/>
            <person name="Xiang Z."/>
            <person name="Hunt C."/>
            <person name="Moore K."/>
            <person name="Hurst S.M."/>
            <person name="Lucas M."/>
            <person name="Rochet M."/>
            <person name="Gaillardin C."/>
            <person name="Tallada V.A."/>
            <person name="Garzon A."/>
            <person name="Thode G."/>
            <person name="Daga R.R."/>
            <person name="Cruzado L."/>
            <person name="Jimenez J."/>
            <person name="Sanchez M."/>
            <person name="del Rey F."/>
            <person name="Benito J."/>
            <person name="Dominguez A."/>
            <person name="Revuelta J.L."/>
            <person name="Moreno S."/>
            <person name="Armstrong J."/>
            <person name="Forsburg S.L."/>
            <person name="Cerutti L."/>
            <person name="Lowe T."/>
            <person name="McCombie W.R."/>
            <person name="Paulsen I."/>
            <person name="Potashkin J."/>
            <person name="Shpakovski G.V."/>
            <person name="Ussery D."/>
            <person name="Barrell B.G."/>
            <person name="Nurse P."/>
        </authorList>
    </citation>
    <scope>NUCLEOTIDE SEQUENCE [LARGE SCALE GENOMIC DNA]</scope>
    <source>
        <strain>972 / ATCC 24843</strain>
    </source>
</reference>
<reference key="3">
    <citation type="journal article" date="2005" name="EMBO J.">
        <title>Molecular analysis of kinetochore architecture in fission yeast.</title>
        <authorList>
            <person name="Liu X."/>
            <person name="McLeod I."/>
            <person name="Anderson S."/>
            <person name="Yates J.R. III"/>
            <person name="He X."/>
        </authorList>
    </citation>
    <scope>IDENTIFICATION IN THE NDC80 COMPLEX</scope>
    <scope>IDENTIFICATION IN THE NMS COMPLEX</scope>
    <scope>SUBCELLULAR LOCATION</scope>
</reference>
<reference key="4">
    <citation type="journal article" date="2005" name="Mol. Biol. Cell">
        <title>Dissociation of the Nuf2-Ndc80 complex releases centromeres from the spindle-pole body during meiotic prophase in fission yeast.</title>
        <authorList>
            <person name="Asakawa H."/>
            <person name="Hayashi A."/>
            <person name="Haraguchi T."/>
            <person name="Hiraoka Y."/>
        </authorList>
    </citation>
    <scope>FUNCTION OF THE NDC80 COMPLEX</scope>
    <scope>SELF-ASSOCIATION</scope>
    <scope>INTERACTION WITH NDC80</scope>
    <scope>SUBCELLULAR LOCATION</scope>
</reference>
<reference key="5">
    <citation type="journal article" date="2006" name="Mol. Biol. Cell">
        <title>Reconstruction of the kinetochore during meiosis in fission yeast Schizosaccharomyces pombe.</title>
        <authorList>
            <person name="Hayashi A."/>
            <person name="Asakawa H."/>
            <person name="Haraguchi T."/>
            <person name="Hiraoka Y."/>
        </authorList>
    </citation>
    <scope>IDENTIFICATION IN THE NMS COMPLEX</scope>
</reference>
<reference key="6">
    <citation type="journal article" date="2006" name="Nat. Biotechnol.">
        <title>ORFeome cloning and global analysis of protein localization in the fission yeast Schizosaccharomyces pombe.</title>
        <authorList>
            <person name="Matsuyama A."/>
            <person name="Arai R."/>
            <person name="Yashiroda Y."/>
            <person name="Shirai A."/>
            <person name="Kamata A."/>
            <person name="Sekido S."/>
            <person name="Kobayashi Y."/>
            <person name="Hashimoto A."/>
            <person name="Hamamoto M."/>
            <person name="Hiraoka Y."/>
            <person name="Horinouchi S."/>
            <person name="Yoshida M."/>
        </authorList>
    </citation>
    <scope>SUBCELLULAR LOCATION [LARGE SCALE ANALYSIS]</scope>
</reference>
<reference key="7">
    <citation type="journal article" date="2008" name="J. Proteome Res.">
        <title>Phosphoproteome analysis of fission yeast.</title>
        <authorList>
            <person name="Wilson-Grady J.T."/>
            <person name="Villen J."/>
            <person name="Gygi S.P."/>
        </authorList>
    </citation>
    <scope>PHOSPHORYLATION [LARGE SCALE ANALYSIS] AT SER-143 AND SER-242</scope>
    <scope>IDENTIFICATION BY MASS SPECTROMETRY</scope>
</reference>
<evidence type="ECO:0000255" key="1"/>
<evidence type="ECO:0000269" key="2">
    <source>
    </source>
</evidence>
<evidence type="ECO:0000269" key="3">
    <source>
    </source>
</evidence>
<evidence type="ECO:0000269" key="4">
    <source>
    </source>
</evidence>
<evidence type="ECO:0000269" key="5">
    <source>
    </source>
</evidence>
<evidence type="ECO:0000269" key="6">
    <source>
    </source>
</evidence>
<evidence type="ECO:0000305" key="7"/>
<organism>
    <name type="scientific">Schizosaccharomyces pombe (strain 972 / ATCC 24843)</name>
    <name type="common">Fission yeast</name>
    <dbReference type="NCBI Taxonomy" id="284812"/>
    <lineage>
        <taxon>Eukaryota</taxon>
        <taxon>Fungi</taxon>
        <taxon>Dikarya</taxon>
        <taxon>Ascomycota</taxon>
        <taxon>Taphrinomycotina</taxon>
        <taxon>Schizosaccharomycetes</taxon>
        <taxon>Schizosaccharomycetales</taxon>
        <taxon>Schizosaccharomycetaceae</taxon>
        <taxon>Schizosaccharomyces</taxon>
    </lineage>
</organism>
<proteinExistence type="evidence at protein level"/>
<accession>Q10173</accession>
<sequence length="441" mass="51911">MARKHTFPSLKRAEILECIDGLGIPFTAKELDQPTSKAVIPLYEEFLDLFMGLTRQNLEEKVNSLQDSVENFEIIHESLRFTVFYQILSQFMQNICFHDFTIQDLLKPDRNRLQLILSAVINFAKLREERLQQFDDDIQKRESLLETYTLLDAQRKDLEEKVLLSQDRKLESEAIIKQNEERNEEMFQSLIEDKRLCSQVRTEYDRIRMEASELKIRYHNVDSLMASTLEEIEKLQSSIVHSPEKLKGKIADTSLRIQNDRSQQVELDKKSKILHTKLNSLQLIEGDLNACLKVLEECLVELDKLEHATVLLSTNQELCDQIEINKKKLEFRKEQLLKQLSNAQEKLEHEQHSRNQKLEAAKQRMDNIREEYKVITQERNKKIQETEKKNAMIEMTEQKIAGMREELESQISSITMEFEKLKSHVELYIAELLRNLRSSNS</sequence>
<comment type="function">
    <text evidence="2 3">Acts as a component of the NMS (Ndc80-MIND-Spc7) super complex which has a role in kinetochore function during late meiotic prophase and throughout the mitotic cell cycle. Acts as a component of the essential kinetochore-associated NDC80 complex, which is required for chromosome segregation and spindle checkpoint activity.</text>
</comment>
<comment type="subunit">
    <text evidence="4 5">Component of the NDC80 complex, which consists of ndc80, nuf2, spc24 and spc25. Can self-associate. Component of the NMS super complex which consists of mis12, mis13, mis14, ndc80, nnf1, nuf2, sos7, spc7, spc24 and spc25.</text>
</comment>
<comment type="interaction">
    <interactant intactId="EBI-1002565">
        <id>Q10173</id>
    </interactant>
    <interactant intactId="EBI-1556697">
        <id>Q9URY2</id>
        <label>alp7</label>
    </interactant>
    <organismsDiffer>false</organismsDiffer>
    <experiments>3</experiments>
</comment>
<comment type="interaction">
    <interactant intactId="EBI-1002565">
        <id>Q10173</id>
    </interactant>
    <interactant intactId="EBI-1002524">
        <id>Q10198</id>
        <label>ndc80</label>
    </interactant>
    <organismsDiffer>false</organismsDiffer>
    <experiments>3</experiments>
</comment>
<comment type="subcellular location">
    <subcellularLocation>
        <location>Nucleus</location>
    </subcellularLocation>
    <subcellularLocation>
        <location>Chromosome</location>
        <location>Centromere</location>
        <location>Kinetochore</location>
    </subcellularLocation>
    <subcellularLocation>
        <location>Cytoplasm</location>
        <location>Cytoskeleton</location>
        <location>Microtubule organizing center</location>
        <location>Spindle pole body</location>
    </subcellularLocation>
    <text>Associated with kinetochores.</text>
</comment>
<comment type="similarity">
    <text evidence="7">Belongs to the NUF2 family.</text>
</comment>
<keyword id="KW-0131">Cell cycle</keyword>
<keyword id="KW-0132">Cell division</keyword>
<keyword id="KW-0137">Centromere</keyword>
<keyword id="KW-0158">Chromosome</keyword>
<keyword id="KW-0175">Coiled coil</keyword>
<keyword id="KW-0963">Cytoplasm</keyword>
<keyword id="KW-0206">Cytoskeleton</keyword>
<keyword id="KW-0995">Kinetochore</keyword>
<keyword id="KW-0469">Meiosis</keyword>
<keyword id="KW-0498">Mitosis</keyword>
<keyword id="KW-0539">Nucleus</keyword>
<keyword id="KW-0597">Phosphoprotein</keyword>
<keyword id="KW-1185">Reference proteome</keyword>